<gene>
    <name evidence="1" type="primary">ldh</name>
    <name type="ordered locus">MYPE9640</name>
</gene>
<protein>
    <recommendedName>
        <fullName evidence="1">L-lactate dehydrogenase</fullName>
        <shortName evidence="1">L-LDH</shortName>
        <ecNumber evidence="1">1.1.1.27</ecNumber>
    </recommendedName>
</protein>
<accession>Q8EUG3</accession>
<proteinExistence type="inferred from homology"/>
<comment type="function">
    <text evidence="1">Catalyzes the conversion of lactate to pyruvate.</text>
</comment>
<comment type="catalytic activity">
    <reaction evidence="1">
        <text>(S)-lactate + NAD(+) = pyruvate + NADH + H(+)</text>
        <dbReference type="Rhea" id="RHEA:23444"/>
        <dbReference type="ChEBI" id="CHEBI:15361"/>
        <dbReference type="ChEBI" id="CHEBI:15378"/>
        <dbReference type="ChEBI" id="CHEBI:16651"/>
        <dbReference type="ChEBI" id="CHEBI:57540"/>
        <dbReference type="ChEBI" id="CHEBI:57945"/>
        <dbReference type="EC" id="1.1.1.27"/>
    </reaction>
</comment>
<comment type="pathway">
    <text evidence="1">Fermentation; pyruvate fermentation to lactate; (S)-lactate from pyruvate: step 1/1.</text>
</comment>
<comment type="subunit">
    <text evidence="1">Homotetramer.</text>
</comment>
<comment type="subcellular location">
    <subcellularLocation>
        <location evidence="1">Cytoplasm</location>
    </subcellularLocation>
</comment>
<comment type="similarity">
    <text evidence="1">Belongs to the LDH/MDH superfamily. LDH family.</text>
</comment>
<name>LDH_MALP2</name>
<dbReference type="EC" id="1.1.1.27" evidence="1"/>
<dbReference type="EMBL" id="BA000026">
    <property type="protein sequence ID" value="BAC44750.1"/>
    <property type="molecule type" value="Genomic_DNA"/>
</dbReference>
<dbReference type="RefSeq" id="WP_011077779.1">
    <property type="nucleotide sequence ID" value="NC_004432.1"/>
</dbReference>
<dbReference type="SMR" id="Q8EUG3"/>
<dbReference type="FunCoup" id="Q8EUG3">
    <property type="interactions" value="110"/>
</dbReference>
<dbReference type="STRING" id="272633.gene:10732084"/>
<dbReference type="KEGG" id="mpe:MYPE9640"/>
<dbReference type="eggNOG" id="COG0039">
    <property type="taxonomic scope" value="Bacteria"/>
</dbReference>
<dbReference type="HOGENOM" id="CLU_045401_1_2_14"/>
<dbReference type="InParanoid" id="Q8EUG3"/>
<dbReference type="UniPathway" id="UPA00554">
    <property type="reaction ID" value="UER00611"/>
</dbReference>
<dbReference type="Proteomes" id="UP000002522">
    <property type="component" value="Chromosome"/>
</dbReference>
<dbReference type="GO" id="GO:0005737">
    <property type="term" value="C:cytoplasm"/>
    <property type="evidence" value="ECO:0007669"/>
    <property type="project" value="UniProtKB-SubCell"/>
</dbReference>
<dbReference type="GO" id="GO:0004459">
    <property type="term" value="F:L-lactate dehydrogenase activity"/>
    <property type="evidence" value="ECO:0007669"/>
    <property type="project" value="UniProtKB-UniRule"/>
</dbReference>
<dbReference type="GO" id="GO:0006096">
    <property type="term" value="P:glycolytic process"/>
    <property type="evidence" value="ECO:0007669"/>
    <property type="project" value="UniProtKB-UniRule"/>
</dbReference>
<dbReference type="GO" id="GO:0006089">
    <property type="term" value="P:lactate metabolic process"/>
    <property type="evidence" value="ECO:0007669"/>
    <property type="project" value="TreeGrafter"/>
</dbReference>
<dbReference type="CDD" id="cd05291">
    <property type="entry name" value="HicDH_like"/>
    <property type="match status" value="1"/>
</dbReference>
<dbReference type="Gene3D" id="3.90.110.10">
    <property type="entry name" value="Lactate dehydrogenase/glycoside hydrolase, family 4, C-terminal"/>
    <property type="match status" value="1"/>
</dbReference>
<dbReference type="Gene3D" id="3.40.50.720">
    <property type="entry name" value="NAD(P)-binding Rossmann-like Domain"/>
    <property type="match status" value="1"/>
</dbReference>
<dbReference type="HAMAP" id="MF_00488">
    <property type="entry name" value="Lactate_dehydrog"/>
    <property type="match status" value="1"/>
</dbReference>
<dbReference type="InterPro" id="IPR001557">
    <property type="entry name" value="L-lactate/malate_DH"/>
</dbReference>
<dbReference type="InterPro" id="IPR011304">
    <property type="entry name" value="L-lactate_DH"/>
</dbReference>
<dbReference type="InterPro" id="IPR018177">
    <property type="entry name" value="L-lactate_DH_AS"/>
</dbReference>
<dbReference type="InterPro" id="IPR022383">
    <property type="entry name" value="Lactate/malate_DH_C"/>
</dbReference>
<dbReference type="InterPro" id="IPR001236">
    <property type="entry name" value="Lactate/malate_DH_N"/>
</dbReference>
<dbReference type="InterPro" id="IPR015955">
    <property type="entry name" value="Lactate_DH/Glyco_Ohase_4_C"/>
</dbReference>
<dbReference type="InterPro" id="IPR036291">
    <property type="entry name" value="NAD(P)-bd_dom_sf"/>
</dbReference>
<dbReference type="NCBIfam" id="TIGR01771">
    <property type="entry name" value="L-LDH-NAD"/>
    <property type="match status" value="1"/>
</dbReference>
<dbReference type="PANTHER" id="PTHR43128">
    <property type="entry name" value="L-2-HYDROXYCARBOXYLATE DEHYDROGENASE (NAD(P)(+))"/>
    <property type="match status" value="1"/>
</dbReference>
<dbReference type="PANTHER" id="PTHR43128:SF16">
    <property type="entry name" value="L-LACTATE DEHYDROGENASE"/>
    <property type="match status" value="1"/>
</dbReference>
<dbReference type="Pfam" id="PF02866">
    <property type="entry name" value="Ldh_1_C"/>
    <property type="match status" value="1"/>
</dbReference>
<dbReference type="Pfam" id="PF00056">
    <property type="entry name" value="Ldh_1_N"/>
    <property type="match status" value="1"/>
</dbReference>
<dbReference type="PIRSF" id="PIRSF000102">
    <property type="entry name" value="Lac_mal_DH"/>
    <property type="match status" value="1"/>
</dbReference>
<dbReference type="PRINTS" id="PR00086">
    <property type="entry name" value="LLDHDRGNASE"/>
</dbReference>
<dbReference type="SUPFAM" id="SSF56327">
    <property type="entry name" value="LDH C-terminal domain-like"/>
    <property type="match status" value="1"/>
</dbReference>
<dbReference type="SUPFAM" id="SSF51735">
    <property type="entry name" value="NAD(P)-binding Rossmann-fold domains"/>
    <property type="match status" value="1"/>
</dbReference>
<dbReference type="PROSITE" id="PS00064">
    <property type="entry name" value="L_LDH"/>
    <property type="match status" value="1"/>
</dbReference>
<sequence>MKTRKVVLIGCGAVGTSFLYSALNQGLFDEYVLIDAFDNLSKGNAWDFEDANAIMSTPAGMIKSGTYEDCADADVVVITAGVPQKPGGETRLQLVGRNAKIMEEIATNVKDSGFDGITVIASNPVDIMGSVYAKVTGFEPNKVIPSGTILDSARLQWEVAKRIKINPASLEVYVVGEHGDSSVSVFSQASVGSIPLSKYRKFSDSQKRAIHKDVMRKAYKIINTKRATFYGIGACLARICKAVLRDENVILPVSIKKNADSDIYIGWPAVVGKDGWHSPLKLTLLAEEKRGFQKSYNSLKKVFEVTWSELGRSEY</sequence>
<evidence type="ECO:0000255" key="1">
    <source>
        <dbReference type="HAMAP-Rule" id="MF_00488"/>
    </source>
</evidence>
<organism>
    <name type="scientific">Malacoplasma penetrans (strain HF-2)</name>
    <name type="common">Mycoplasma penetrans</name>
    <dbReference type="NCBI Taxonomy" id="272633"/>
    <lineage>
        <taxon>Bacteria</taxon>
        <taxon>Bacillati</taxon>
        <taxon>Mycoplasmatota</taxon>
        <taxon>Mycoplasmoidales</taxon>
        <taxon>Mycoplasmoidaceae</taxon>
        <taxon>Malacoplasma</taxon>
    </lineage>
</organism>
<feature type="chain" id="PRO_0000168373" description="L-lactate dehydrogenase">
    <location>
        <begin position="1"/>
        <end position="315"/>
    </location>
</feature>
<feature type="active site" description="Proton acceptor" evidence="1">
    <location>
        <position position="178"/>
    </location>
</feature>
<feature type="binding site" evidence="1">
    <location>
        <position position="14"/>
    </location>
    <ligand>
        <name>NAD(+)</name>
        <dbReference type="ChEBI" id="CHEBI:57540"/>
    </ligand>
</feature>
<feature type="binding site" evidence="1">
    <location>
        <position position="35"/>
    </location>
    <ligand>
        <name>NAD(+)</name>
        <dbReference type="ChEBI" id="CHEBI:57540"/>
    </ligand>
</feature>
<feature type="binding site" evidence="1">
    <location>
        <position position="67"/>
    </location>
    <ligand>
        <name>NAD(+)</name>
        <dbReference type="ChEBI" id="CHEBI:57540"/>
    </ligand>
</feature>
<feature type="binding site" evidence="1">
    <location>
        <begin position="81"/>
        <end position="82"/>
    </location>
    <ligand>
        <name>NAD(+)</name>
        <dbReference type="ChEBI" id="CHEBI:57540"/>
    </ligand>
</feature>
<feature type="binding site" evidence="1">
    <location>
        <position position="84"/>
    </location>
    <ligand>
        <name>substrate</name>
    </ligand>
</feature>
<feature type="binding site" evidence="1">
    <location>
        <position position="91"/>
    </location>
    <ligand>
        <name>substrate</name>
    </ligand>
</feature>
<feature type="binding site" evidence="1">
    <location>
        <begin position="121"/>
        <end position="123"/>
    </location>
    <ligand>
        <name>NAD(+)</name>
        <dbReference type="ChEBI" id="CHEBI:57540"/>
    </ligand>
</feature>
<feature type="binding site" evidence="1">
    <location>
        <begin position="123"/>
        <end position="126"/>
    </location>
    <ligand>
        <name>substrate</name>
    </ligand>
</feature>
<feature type="binding site" evidence="1">
    <location>
        <position position="146"/>
    </location>
    <ligand>
        <name>NAD(+)</name>
        <dbReference type="ChEBI" id="CHEBI:57540"/>
    </ligand>
</feature>
<feature type="binding site" evidence="1">
    <location>
        <begin position="151"/>
        <end position="154"/>
    </location>
    <ligand>
        <name>substrate</name>
    </ligand>
</feature>
<feature type="binding site" evidence="1">
    <location>
        <position position="228"/>
    </location>
    <ligand>
        <name>substrate</name>
    </ligand>
</feature>
<feature type="modified residue" description="Phosphotyrosine" evidence="1">
    <location>
        <position position="219"/>
    </location>
</feature>
<keyword id="KW-0963">Cytoplasm</keyword>
<keyword id="KW-0520">NAD</keyword>
<keyword id="KW-0560">Oxidoreductase</keyword>
<keyword id="KW-0597">Phosphoprotein</keyword>
<keyword id="KW-1185">Reference proteome</keyword>
<reference key="1">
    <citation type="journal article" date="2002" name="Nucleic Acids Res.">
        <title>The complete genomic sequence of Mycoplasma penetrans, an intracellular bacterial pathogen in humans.</title>
        <authorList>
            <person name="Sasaki Y."/>
            <person name="Ishikawa J."/>
            <person name="Yamashita A."/>
            <person name="Oshima K."/>
            <person name="Kenri T."/>
            <person name="Furuya K."/>
            <person name="Yoshino C."/>
            <person name="Horino A."/>
            <person name="Shiba T."/>
            <person name="Sasaki T."/>
            <person name="Hattori M."/>
        </authorList>
    </citation>
    <scope>NUCLEOTIDE SEQUENCE [LARGE SCALE GENOMIC DNA]</scope>
    <source>
        <strain>HF-2</strain>
    </source>
</reference>